<sequence>MSRYVGAIDQGTTSSRFIVFDREGSVIALAQAEHAQIYPAPGHVEHDATEIWTKTQSVMREALEKGGLQPSDLAAVGITNQRETTLIWDRKTGKPLHNALVWQDTRNDRLVAEFARDGGRDRFRDLTGLPLASYFSGLKLRWLLDHVAGARAKAEAGDVLFGNIDTWLVWNLTGGTEGGLHVTDVTNASRTQLMSLKTLEWDEGMLRTFGIPKAMLPKIVSSSEVYGETRAPFAGVPIAGILGDQQAALFGQTCFAPGEAKNTYGTGCFALMNTGEEPVPSKAGLVTTLAYRLDGQKPAYALEGSIAITGALVQWLRDNLHMIKDSAEVETLATTVEDNGGVYFVPAFSGLYAPHWNEGARGLIIGLTRYVNRGHIARSVLEATAFQTHEVLDAMAKDSGIPVKELRADGGMVANNTLMQFQADMLDVPVVRPKVAETTALGAAYAAGLAVGYWKGLDDLKRNWGVDKRWTPKMDAGRRETIAAAWSRAVQRSFDWKTDED</sequence>
<accession>B1LWN6</accession>
<dbReference type="EC" id="2.7.1.30" evidence="1"/>
<dbReference type="EMBL" id="CP001001">
    <property type="protein sequence ID" value="ACB24173.1"/>
    <property type="molecule type" value="Genomic_DNA"/>
</dbReference>
<dbReference type="RefSeq" id="WP_012319152.1">
    <property type="nucleotide sequence ID" value="NC_010505.1"/>
</dbReference>
<dbReference type="SMR" id="B1LWN6"/>
<dbReference type="STRING" id="426355.Mrad2831_2178"/>
<dbReference type="GeneID" id="6138210"/>
<dbReference type="KEGG" id="mrd:Mrad2831_2178"/>
<dbReference type="eggNOG" id="COG0554">
    <property type="taxonomic scope" value="Bacteria"/>
</dbReference>
<dbReference type="HOGENOM" id="CLU_009281_2_3_5"/>
<dbReference type="OrthoDB" id="9805576at2"/>
<dbReference type="UniPathway" id="UPA00618">
    <property type="reaction ID" value="UER00672"/>
</dbReference>
<dbReference type="Proteomes" id="UP000006589">
    <property type="component" value="Chromosome"/>
</dbReference>
<dbReference type="GO" id="GO:0005829">
    <property type="term" value="C:cytosol"/>
    <property type="evidence" value="ECO:0007669"/>
    <property type="project" value="TreeGrafter"/>
</dbReference>
<dbReference type="GO" id="GO:0005524">
    <property type="term" value="F:ATP binding"/>
    <property type="evidence" value="ECO:0007669"/>
    <property type="project" value="UniProtKB-UniRule"/>
</dbReference>
<dbReference type="GO" id="GO:0004370">
    <property type="term" value="F:glycerol kinase activity"/>
    <property type="evidence" value="ECO:0000250"/>
    <property type="project" value="UniProtKB"/>
</dbReference>
<dbReference type="GO" id="GO:0019563">
    <property type="term" value="P:glycerol catabolic process"/>
    <property type="evidence" value="ECO:0007669"/>
    <property type="project" value="UniProtKB-UniRule"/>
</dbReference>
<dbReference type="GO" id="GO:0006071">
    <property type="term" value="P:glycerol metabolic process"/>
    <property type="evidence" value="ECO:0000250"/>
    <property type="project" value="UniProtKB"/>
</dbReference>
<dbReference type="GO" id="GO:0006072">
    <property type="term" value="P:glycerol-3-phosphate metabolic process"/>
    <property type="evidence" value="ECO:0007669"/>
    <property type="project" value="InterPro"/>
</dbReference>
<dbReference type="CDD" id="cd07769">
    <property type="entry name" value="ASKHA_NBD_FGGY_GK"/>
    <property type="match status" value="1"/>
</dbReference>
<dbReference type="FunFam" id="3.30.420.40:FF:000007">
    <property type="entry name" value="Glycerol kinase"/>
    <property type="match status" value="1"/>
</dbReference>
<dbReference type="FunFam" id="3.30.420.40:FF:000008">
    <property type="entry name" value="Glycerol kinase"/>
    <property type="match status" value="1"/>
</dbReference>
<dbReference type="Gene3D" id="3.30.420.40">
    <property type="match status" value="2"/>
</dbReference>
<dbReference type="HAMAP" id="MF_00186">
    <property type="entry name" value="Glycerol_kin"/>
    <property type="match status" value="1"/>
</dbReference>
<dbReference type="InterPro" id="IPR043129">
    <property type="entry name" value="ATPase_NBD"/>
</dbReference>
<dbReference type="InterPro" id="IPR000577">
    <property type="entry name" value="Carb_kinase_FGGY"/>
</dbReference>
<dbReference type="InterPro" id="IPR018483">
    <property type="entry name" value="Carb_kinase_FGGY_CS"/>
</dbReference>
<dbReference type="InterPro" id="IPR018485">
    <property type="entry name" value="FGGY_C"/>
</dbReference>
<dbReference type="InterPro" id="IPR018484">
    <property type="entry name" value="FGGY_N"/>
</dbReference>
<dbReference type="InterPro" id="IPR005999">
    <property type="entry name" value="Glycerol_kin"/>
</dbReference>
<dbReference type="NCBIfam" id="TIGR01311">
    <property type="entry name" value="glycerol_kin"/>
    <property type="match status" value="1"/>
</dbReference>
<dbReference type="NCBIfam" id="NF000756">
    <property type="entry name" value="PRK00047.1"/>
    <property type="match status" value="1"/>
</dbReference>
<dbReference type="PANTHER" id="PTHR10196:SF69">
    <property type="entry name" value="GLYCEROL KINASE"/>
    <property type="match status" value="1"/>
</dbReference>
<dbReference type="PANTHER" id="PTHR10196">
    <property type="entry name" value="SUGAR KINASE"/>
    <property type="match status" value="1"/>
</dbReference>
<dbReference type="Pfam" id="PF02782">
    <property type="entry name" value="FGGY_C"/>
    <property type="match status" value="1"/>
</dbReference>
<dbReference type="Pfam" id="PF00370">
    <property type="entry name" value="FGGY_N"/>
    <property type="match status" value="1"/>
</dbReference>
<dbReference type="PIRSF" id="PIRSF000538">
    <property type="entry name" value="GlpK"/>
    <property type="match status" value="1"/>
</dbReference>
<dbReference type="SUPFAM" id="SSF53067">
    <property type="entry name" value="Actin-like ATPase domain"/>
    <property type="match status" value="2"/>
</dbReference>
<dbReference type="PROSITE" id="PS00933">
    <property type="entry name" value="FGGY_KINASES_1"/>
    <property type="match status" value="1"/>
</dbReference>
<dbReference type="PROSITE" id="PS00445">
    <property type="entry name" value="FGGY_KINASES_2"/>
    <property type="match status" value="1"/>
</dbReference>
<proteinExistence type="inferred from homology"/>
<keyword id="KW-0067">ATP-binding</keyword>
<keyword id="KW-0319">Glycerol metabolism</keyword>
<keyword id="KW-0418">Kinase</keyword>
<keyword id="KW-0547">Nucleotide-binding</keyword>
<keyword id="KW-0808">Transferase</keyword>
<evidence type="ECO:0000255" key="1">
    <source>
        <dbReference type="HAMAP-Rule" id="MF_00186"/>
    </source>
</evidence>
<name>GLPK_METRJ</name>
<gene>
    <name evidence="1" type="primary">glpK</name>
    <name type="ordered locus">Mrad2831_2178</name>
</gene>
<organism>
    <name type="scientific">Methylobacterium radiotolerans (strain ATCC 27329 / DSM 1819 / JCM 2831 / NBRC 15690 / NCIMB 10815 / 0-1)</name>
    <dbReference type="NCBI Taxonomy" id="426355"/>
    <lineage>
        <taxon>Bacteria</taxon>
        <taxon>Pseudomonadati</taxon>
        <taxon>Pseudomonadota</taxon>
        <taxon>Alphaproteobacteria</taxon>
        <taxon>Hyphomicrobiales</taxon>
        <taxon>Methylobacteriaceae</taxon>
        <taxon>Methylobacterium</taxon>
    </lineage>
</organism>
<protein>
    <recommendedName>
        <fullName evidence="1">Glycerol kinase</fullName>
        <ecNumber evidence="1">2.7.1.30</ecNumber>
    </recommendedName>
    <alternativeName>
        <fullName evidence="1">ATP:glycerol 3-phosphotransferase</fullName>
    </alternativeName>
    <alternativeName>
        <fullName evidence="1">Glycerokinase</fullName>
        <shortName evidence="1">GK</shortName>
    </alternativeName>
</protein>
<reference key="1">
    <citation type="submission" date="2008-03" db="EMBL/GenBank/DDBJ databases">
        <title>Complete sequence of chromosome of Methylobacterium radiotolerans JCM 2831.</title>
        <authorList>
            <consortium name="US DOE Joint Genome Institute"/>
            <person name="Copeland A."/>
            <person name="Lucas S."/>
            <person name="Lapidus A."/>
            <person name="Glavina del Rio T."/>
            <person name="Dalin E."/>
            <person name="Tice H."/>
            <person name="Bruce D."/>
            <person name="Goodwin L."/>
            <person name="Pitluck S."/>
            <person name="Kiss H."/>
            <person name="Brettin T."/>
            <person name="Detter J.C."/>
            <person name="Han C."/>
            <person name="Kuske C.R."/>
            <person name="Schmutz J."/>
            <person name="Larimer F."/>
            <person name="Land M."/>
            <person name="Hauser L."/>
            <person name="Kyrpides N."/>
            <person name="Mikhailova N."/>
            <person name="Marx C.J."/>
            <person name="Richardson P."/>
        </authorList>
    </citation>
    <scope>NUCLEOTIDE SEQUENCE [LARGE SCALE GENOMIC DNA]</scope>
    <source>
        <strain>ATCC 27329 / DSM 1819 / JCM 2831 / NBRC 15690 / NCIMB 10815 / 0-1</strain>
    </source>
</reference>
<feature type="chain" id="PRO_1000098745" description="Glycerol kinase">
    <location>
        <begin position="1"/>
        <end position="501"/>
    </location>
</feature>
<feature type="binding site" evidence="1">
    <location>
        <position position="12"/>
    </location>
    <ligand>
        <name>ADP</name>
        <dbReference type="ChEBI" id="CHEBI:456216"/>
    </ligand>
</feature>
<feature type="binding site" evidence="1">
    <location>
        <position position="12"/>
    </location>
    <ligand>
        <name>ATP</name>
        <dbReference type="ChEBI" id="CHEBI:30616"/>
    </ligand>
</feature>
<feature type="binding site" evidence="1">
    <location>
        <position position="12"/>
    </location>
    <ligand>
        <name>sn-glycerol 3-phosphate</name>
        <dbReference type="ChEBI" id="CHEBI:57597"/>
    </ligand>
</feature>
<feature type="binding site" evidence="1">
    <location>
        <position position="13"/>
    </location>
    <ligand>
        <name>ATP</name>
        <dbReference type="ChEBI" id="CHEBI:30616"/>
    </ligand>
</feature>
<feature type="binding site" evidence="1">
    <location>
        <position position="14"/>
    </location>
    <ligand>
        <name>ATP</name>
        <dbReference type="ChEBI" id="CHEBI:30616"/>
    </ligand>
</feature>
<feature type="binding site" evidence="1">
    <location>
        <position position="16"/>
    </location>
    <ligand>
        <name>ADP</name>
        <dbReference type="ChEBI" id="CHEBI:456216"/>
    </ligand>
</feature>
<feature type="binding site" evidence="1">
    <location>
        <position position="82"/>
    </location>
    <ligand>
        <name>glycerol</name>
        <dbReference type="ChEBI" id="CHEBI:17754"/>
    </ligand>
</feature>
<feature type="binding site" evidence="1">
    <location>
        <position position="82"/>
    </location>
    <ligand>
        <name>sn-glycerol 3-phosphate</name>
        <dbReference type="ChEBI" id="CHEBI:57597"/>
    </ligand>
</feature>
<feature type="binding site" evidence="1">
    <location>
        <position position="83"/>
    </location>
    <ligand>
        <name>glycerol</name>
        <dbReference type="ChEBI" id="CHEBI:17754"/>
    </ligand>
</feature>
<feature type="binding site" evidence="1">
    <location>
        <position position="83"/>
    </location>
    <ligand>
        <name>sn-glycerol 3-phosphate</name>
        <dbReference type="ChEBI" id="CHEBI:57597"/>
    </ligand>
</feature>
<feature type="binding site" evidence="1">
    <location>
        <position position="134"/>
    </location>
    <ligand>
        <name>glycerol</name>
        <dbReference type="ChEBI" id="CHEBI:17754"/>
    </ligand>
</feature>
<feature type="binding site" evidence="1">
    <location>
        <position position="134"/>
    </location>
    <ligand>
        <name>sn-glycerol 3-phosphate</name>
        <dbReference type="ChEBI" id="CHEBI:57597"/>
    </ligand>
</feature>
<feature type="binding site" evidence="1">
    <location>
        <position position="244"/>
    </location>
    <ligand>
        <name>glycerol</name>
        <dbReference type="ChEBI" id="CHEBI:17754"/>
    </ligand>
</feature>
<feature type="binding site" evidence="1">
    <location>
        <position position="244"/>
    </location>
    <ligand>
        <name>sn-glycerol 3-phosphate</name>
        <dbReference type="ChEBI" id="CHEBI:57597"/>
    </ligand>
</feature>
<feature type="binding site" evidence="1">
    <location>
        <position position="245"/>
    </location>
    <ligand>
        <name>glycerol</name>
        <dbReference type="ChEBI" id="CHEBI:17754"/>
    </ligand>
</feature>
<feature type="binding site" evidence="1">
    <location>
        <position position="266"/>
    </location>
    <ligand>
        <name>ADP</name>
        <dbReference type="ChEBI" id="CHEBI:456216"/>
    </ligand>
</feature>
<feature type="binding site" evidence="1">
    <location>
        <position position="266"/>
    </location>
    <ligand>
        <name>ATP</name>
        <dbReference type="ChEBI" id="CHEBI:30616"/>
    </ligand>
</feature>
<feature type="binding site" evidence="1">
    <location>
        <position position="310"/>
    </location>
    <ligand>
        <name>ADP</name>
        <dbReference type="ChEBI" id="CHEBI:456216"/>
    </ligand>
</feature>
<feature type="binding site" evidence="1">
    <location>
        <position position="310"/>
    </location>
    <ligand>
        <name>ATP</name>
        <dbReference type="ChEBI" id="CHEBI:30616"/>
    </ligand>
</feature>
<feature type="binding site" evidence="1">
    <location>
        <position position="314"/>
    </location>
    <ligand>
        <name>ATP</name>
        <dbReference type="ChEBI" id="CHEBI:30616"/>
    </ligand>
</feature>
<feature type="binding site" evidence="1">
    <location>
        <position position="411"/>
    </location>
    <ligand>
        <name>ADP</name>
        <dbReference type="ChEBI" id="CHEBI:456216"/>
    </ligand>
</feature>
<feature type="binding site" evidence="1">
    <location>
        <position position="411"/>
    </location>
    <ligand>
        <name>ATP</name>
        <dbReference type="ChEBI" id="CHEBI:30616"/>
    </ligand>
</feature>
<feature type="binding site" evidence="1">
    <location>
        <position position="415"/>
    </location>
    <ligand>
        <name>ADP</name>
        <dbReference type="ChEBI" id="CHEBI:456216"/>
    </ligand>
</feature>
<comment type="function">
    <text evidence="1">Key enzyme in the regulation of glycerol uptake and metabolism. Catalyzes the phosphorylation of glycerol to yield sn-glycerol 3-phosphate.</text>
</comment>
<comment type="catalytic activity">
    <reaction evidence="1">
        <text>glycerol + ATP = sn-glycerol 3-phosphate + ADP + H(+)</text>
        <dbReference type="Rhea" id="RHEA:21644"/>
        <dbReference type="ChEBI" id="CHEBI:15378"/>
        <dbReference type="ChEBI" id="CHEBI:17754"/>
        <dbReference type="ChEBI" id="CHEBI:30616"/>
        <dbReference type="ChEBI" id="CHEBI:57597"/>
        <dbReference type="ChEBI" id="CHEBI:456216"/>
        <dbReference type="EC" id="2.7.1.30"/>
    </reaction>
</comment>
<comment type="activity regulation">
    <text evidence="1">Inhibited by fructose 1,6-bisphosphate (FBP).</text>
</comment>
<comment type="pathway">
    <text evidence="1">Polyol metabolism; glycerol degradation via glycerol kinase pathway; sn-glycerol 3-phosphate from glycerol: step 1/1.</text>
</comment>
<comment type="similarity">
    <text evidence="1">Belongs to the FGGY kinase family.</text>
</comment>